<gene>
    <name evidence="1" type="primary">ureG</name>
    <name type="ordered locus">Syncc9902_2251</name>
</gene>
<dbReference type="EMBL" id="CP000097">
    <property type="protein sequence ID" value="ABB27209.1"/>
    <property type="molecule type" value="Genomic_DNA"/>
</dbReference>
<dbReference type="RefSeq" id="WP_011360986.1">
    <property type="nucleotide sequence ID" value="NC_007513.1"/>
</dbReference>
<dbReference type="SMR" id="Q3AVR7"/>
<dbReference type="STRING" id="316279.Syncc9902_2251"/>
<dbReference type="KEGG" id="sye:Syncc9902_2251"/>
<dbReference type="eggNOG" id="COG0378">
    <property type="taxonomic scope" value="Bacteria"/>
</dbReference>
<dbReference type="HOGENOM" id="CLU_072144_1_0_3"/>
<dbReference type="OrthoDB" id="9802035at2"/>
<dbReference type="Proteomes" id="UP000002712">
    <property type="component" value="Chromosome"/>
</dbReference>
<dbReference type="GO" id="GO:0005737">
    <property type="term" value="C:cytoplasm"/>
    <property type="evidence" value="ECO:0007669"/>
    <property type="project" value="UniProtKB-SubCell"/>
</dbReference>
<dbReference type="GO" id="GO:0005525">
    <property type="term" value="F:GTP binding"/>
    <property type="evidence" value="ECO:0007669"/>
    <property type="project" value="UniProtKB-KW"/>
</dbReference>
<dbReference type="GO" id="GO:0003924">
    <property type="term" value="F:GTPase activity"/>
    <property type="evidence" value="ECO:0007669"/>
    <property type="project" value="InterPro"/>
</dbReference>
<dbReference type="GO" id="GO:0016151">
    <property type="term" value="F:nickel cation binding"/>
    <property type="evidence" value="ECO:0007669"/>
    <property type="project" value="UniProtKB-UniRule"/>
</dbReference>
<dbReference type="GO" id="GO:0043419">
    <property type="term" value="P:urea catabolic process"/>
    <property type="evidence" value="ECO:0007669"/>
    <property type="project" value="InterPro"/>
</dbReference>
<dbReference type="CDD" id="cd05540">
    <property type="entry name" value="UreG"/>
    <property type="match status" value="1"/>
</dbReference>
<dbReference type="FunFam" id="3.40.50.300:FF:000208">
    <property type="entry name" value="Urease accessory protein UreG"/>
    <property type="match status" value="1"/>
</dbReference>
<dbReference type="Gene3D" id="3.40.50.300">
    <property type="entry name" value="P-loop containing nucleotide triphosphate hydrolases"/>
    <property type="match status" value="1"/>
</dbReference>
<dbReference type="HAMAP" id="MF_01389">
    <property type="entry name" value="UreG"/>
    <property type="match status" value="1"/>
</dbReference>
<dbReference type="InterPro" id="IPR003495">
    <property type="entry name" value="CobW/HypB/UreG_nucleotide-bd"/>
</dbReference>
<dbReference type="InterPro" id="IPR027417">
    <property type="entry name" value="P-loop_NTPase"/>
</dbReference>
<dbReference type="InterPro" id="IPR004400">
    <property type="entry name" value="UreG"/>
</dbReference>
<dbReference type="NCBIfam" id="TIGR00101">
    <property type="entry name" value="ureG"/>
    <property type="match status" value="1"/>
</dbReference>
<dbReference type="PANTHER" id="PTHR31715">
    <property type="entry name" value="UREASE ACCESSORY PROTEIN G"/>
    <property type="match status" value="1"/>
</dbReference>
<dbReference type="PANTHER" id="PTHR31715:SF0">
    <property type="entry name" value="UREASE ACCESSORY PROTEIN G"/>
    <property type="match status" value="1"/>
</dbReference>
<dbReference type="Pfam" id="PF02492">
    <property type="entry name" value="cobW"/>
    <property type="match status" value="1"/>
</dbReference>
<dbReference type="PIRSF" id="PIRSF005624">
    <property type="entry name" value="Ni-bind_GTPase"/>
    <property type="match status" value="1"/>
</dbReference>
<dbReference type="SUPFAM" id="SSF52540">
    <property type="entry name" value="P-loop containing nucleoside triphosphate hydrolases"/>
    <property type="match status" value="1"/>
</dbReference>
<protein>
    <recommendedName>
        <fullName evidence="1">Urease accessory protein UreG</fullName>
    </recommendedName>
</protein>
<proteinExistence type="inferred from homology"/>
<comment type="function">
    <text evidence="1">Facilitates the functional incorporation of the urease nickel metallocenter. This process requires GTP hydrolysis, probably effectuated by UreG.</text>
</comment>
<comment type="subunit">
    <text evidence="1">Homodimer. UreD, UreF and UreG form a complex that acts as a GTP-hydrolysis-dependent molecular chaperone, activating the urease apoprotein by helping to assemble the nickel containing metallocenter of UreC. The UreE protein probably delivers the nickel.</text>
</comment>
<comment type="subcellular location">
    <subcellularLocation>
        <location evidence="1">Cytoplasm</location>
    </subcellularLocation>
</comment>
<comment type="similarity">
    <text evidence="1">Belongs to the SIMIBI class G3E GTPase family. UreG subfamily.</text>
</comment>
<keyword id="KW-0143">Chaperone</keyword>
<keyword id="KW-0963">Cytoplasm</keyword>
<keyword id="KW-0342">GTP-binding</keyword>
<keyword id="KW-0996">Nickel insertion</keyword>
<keyword id="KW-0547">Nucleotide-binding</keyword>
<keyword id="KW-1185">Reference proteome</keyword>
<evidence type="ECO:0000255" key="1">
    <source>
        <dbReference type="HAMAP-Rule" id="MF_01389"/>
    </source>
</evidence>
<organism>
    <name type="scientific">Synechococcus sp. (strain CC9902)</name>
    <dbReference type="NCBI Taxonomy" id="316279"/>
    <lineage>
        <taxon>Bacteria</taxon>
        <taxon>Bacillati</taxon>
        <taxon>Cyanobacteriota</taxon>
        <taxon>Cyanophyceae</taxon>
        <taxon>Synechococcales</taxon>
        <taxon>Synechococcaceae</taxon>
        <taxon>Synechococcus</taxon>
    </lineage>
</organism>
<sequence length="201" mass="21519">MASKLRLGVAGPVGSGKTALVEALCRELCERLELAVVTNDIYTQEDAQFLTRAGVLPPERIRGVETGGCPHTAIREDCSINRAAVGDLEAQFPGLDLVLVESGGDNLAASFSPELVDLCIYVIDVAAGDKIPRKGGPGITRSDLLVINKIDLAPLVGADLSVMEHDTQRMRGDRPWCFTNLKNGVGLNQVVEFVLQQLPNV</sequence>
<feature type="chain" id="PRO_1000145244" description="Urease accessory protein UreG">
    <location>
        <begin position="1"/>
        <end position="201"/>
    </location>
</feature>
<feature type="binding site" evidence="1">
    <location>
        <begin position="11"/>
        <end position="18"/>
    </location>
    <ligand>
        <name>GTP</name>
        <dbReference type="ChEBI" id="CHEBI:37565"/>
    </ligand>
</feature>
<accession>Q3AVR7</accession>
<name>UREG_SYNS9</name>
<reference key="1">
    <citation type="submission" date="2005-08" db="EMBL/GenBank/DDBJ databases">
        <title>Complete sequence of Synechococcus sp. CC9902.</title>
        <authorList>
            <person name="Copeland A."/>
            <person name="Lucas S."/>
            <person name="Lapidus A."/>
            <person name="Barry K."/>
            <person name="Detter J.C."/>
            <person name="Glavina T."/>
            <person name="Hammon N."/>
            <person name="Israni S."/>
            <person name="Pitluck S."/>
            <person name="Martinez M."/>
            <person name="Schmutz J."/>
            <person name="Larimer F."/>
            <person name="Land M."/>
            <person name="Kyrpides N."/>
            <person name="Ivanova N."/>
            <person name="Richardson P."/>
        </authorList>
    </citation>
    <scope>NUCLEOTIDE SEQUENCE [LARGE SCALE GENOMIC DNA]</scope>
    <source>
        <strain>CC9902</strain>
    </source>
</reference>